<keyword id="KW-0131">Cell cycle</keyword>
<keyword id="KW-0132">Cell division</keyword>
<keyword id="KW-0498">Mitosis</keyword>
<keyword id="KW-1185">Reference proteome</keyword>
<keyword id="KW-0833">Ubl conjugation pathway</keyword>
<protein>
    <recommendedName>
        <fullName>Anaphase-promoting complex subunit 10</fullName>
    </recommendedName>
    <alternativeName>
        <fullName>20S cyclosome/APC complex protein apc10</fullName>
    </alternativeName>
</protein>
<gene>
    <name type="primary">apc10</name>
    <name type="ORF">SPBC1A4.01</name>
    <name type="ORF">SPBC1E8.06</name>
</gene>
<organism>
    <name type="scientific">Schizosaccharomyces pombe (strain 972 / ATCC 24843)</name>
    <name type="common">Fission yeast</name>
    <dbReference type="NCBI Taxonomy" id="284812"/>
    <lineage>
        <taxon>Eukaryota</taxon>
        <taxon>Fungi</taxon>
        <taxon>Dikarya</taxon>
        <taxon>Ascomycota</taxon>
        <taxon>Taphrinomycotina</taxon>
        <taxon>Schizosaccharomycetes</taxon>
        <taxon>Schizosaccharomycetales</taxon>
        <taxon>Schizosaccharomycetaceae</taxon>
        <taxon>Schizosaccharomyces</taxon>
    </lineage>
</organism>
<reference key="1">
    <citation type="journal article" date="1998" name="EMBO J.">
        <title>Apc10 and Ste9/Srw1, two regulators of the APC-cyclosome, as well as the CDK inhibitor Rum1 are required for G1 cell-cycle arrest in fission yeast.</title>
        <authorList>
            <person name="Kominami K."/>
            <person name="Seth-Smith H."/>
            <person name="Toda T."/>
        </authorList>
    </citation>
    <scope>NUCLEOTIDE SEQUENCE [GENOMIC DNA]</scope>
    <scope>FUNCTION</scope>
    <scope>INTERACTION WITH NUC2</scope>
</reference>
<reference key="2">
    <citation type="journal article" date="2002" name="Nature">
        <title>The genome sequence of Schizosaccharomyces pombe.</title>
        <authorList>
            <person name="Wood V."/>
            <person name="Gwilliam R."/>
            <person name="Rajandream M.A."/>
            <person name="Lyne M.H."/>
            <person name="Lyne R."/>
            <person name="Stewart A."/>
            <person name="Sgouros J.G."/>
            <person name="Peat N."/>
            <person name="Hayles J."/>
            <person name="Baker S.G."/>
            <person name="Basham D."/>
            <person name="Bowman S."/>
            <person name="Brooks K."/>
            <person name="Brown D."/>
            <person name="Brown S."/>
            <person name="Chillingworth T."/>
            <person name="Churcher C.M."/>
            <person name="Collins M."/>
            <person name="Connor R."/>
            <person name="Cronin A."/>
            <person name="Davis P."/>
            <person name="Feltwell T."/>
            <person name="Fraser A."/>
            <person name="Gentles S."/>
            <person name="Goble A."/>
            <person name="Hamlin N."/>
            <person name="Harris D.E."/>
            <person name="Hidalgo J."/>
            <person name="Hodgson G."/>
            <person name="Holroyd S."/>
            <person name="Hornsby T."/>
            <person name="Howarth S."/>
            <person name="Huckle E.J."/>
            <person name="Hunt S."/>
            <person name="Jagels K."/>
            <person name="James K.D."/>
            <person name="Jones L."/>
            <person name="Jones M."/>
            <person name="Leather S."/>
            <person name="McDonald S."/>
            <person name="McLean J."/>
            <person name="Mooney P."/>
            <person name="Moule S."/>
            <person name="Mungall K.L."/>
            <person name="Murphy L.D."/>
            <person name="Niblett D."/>
            <person name="Odell C."/>
            <person name="Oliver K."/>
            <person name="O'Neil S."/>
            <person name="Pearson D."/>
            <person name="Quail M.A."/>
            <person name="Rabbinowitsch E."/>
            <person name="Rutherford K.M."/>
            <person name="Rutter S."/>
            <person name="Saunders D."/>
            <person name="Seeger K."/>
            <person name="Sharp S."/>
            <person name="Skelton J."/>
            <person name="Simmonds M.N."/>
            <person name="Squares R."/>
            <person name="Squares S."/>
            <person name="Stevens K."/>
            <person name="Taylor K."/>
            <person name="Taylor R.G."/>
            <person name="Tivey A."/>
            <person name="Walsh S.V."/>
            <person name="Warren T."/>
            <person name="Whitehead S."/>
            <person name="Woodward J.R."/>
            <person name="Volckaert G."/>
            <person name="Aert R."/>
            <person name="Robben J."/>
            <person name="Grymonprez B."/>
            <person name="Weltjens I."/>
            <person name="Vanstreels E."/>
            <person name="Rieger M."/>
            <person name="Schaefer M."/>
            <person name="Mueller-Auer S."/>
            <person name="Gabel C."/>
            <person name="Fuchs M."/>
            <person name="Duesterhoeft A."/>
            <person name="Fritzc C."/>
            <person name="Holzer E."/>
            <person name="Moestl D."/>
            <person name="Hilbert H."/>
            <person name="Borzym K."/>
            <person name="Langer I."/>
            <person name="Beck A."/>
            <person name="Lehrach H."/>
            <person name="Reinhardt R."/>
            <person name="Pohl T.M."/>
            <person name="Eger P."/>
            <person name="Zimmermann W."/>
            <person name="Wedler H."/>
            <person name="Wambutt R."/>
            <person name="Purnelle B."/>
            <person name="Goffeau A."/>
            <person name="Cadieu E."/>
            <person name="Dreano S."/>
            <person name="Gloux S."/>
            <person name="Lelaure V."/>
            <person name="Mottier S."/>
            <person name="Galibert F."/>
            <person name="Aves S.J."/>
            <person name="Xiang Z."/>
            <person name="Hunt C."/>
            <person name="Moore K."/>
            <person name="Hurst S.M."/>
            <person name="Lucas M."/>
            <person name="Rochet M."/>
            <person name="Gaillardin C."/>
            <person name="Tallada V.A."/>
            <person name="Garzon A."/>
            <person name="Thode G."/>
            <person name="Daga R.R."/>
            <person name="Cruzado L."/>
            <person name="Jimenez J."/>
            <person name="Sanchez M."/>
            <person name="del Rey F."/>
            <person name="Benito J."/>
            <person name="Dominguez A."/>
            <person name="Revuelta J.L."/>
            <person name="Moreno S."/>
            <person name="Armstrong J."/>
            <person name="Forsburg S.L."/>
            <person name="Cerutti L."/>
            <person name="Lowe T."/>
            <person name="McCombie W.R."/>
            <person name="Paulsen I."/>
            <person name="Potashkin J."/>
            <person name="Shpakovski G.V."/>
            <person name="Ussery D."/>
            <person name="Barrell B.G."/>
            <person name="Nurse P."/>
        </authorList>
    </citation>
    <scope>NUCLEOTIDE SEQUENCE [LARGE SCALE GENOMIC DNA]</scope>
    <source>
        <strain>972 / ATCC 24843</strain>
    </source>
</reference>
<reference key="3">
    <citation type="journal article" date="2002" name="Curr. Biol.">
        <title>Proteomics analysis identifies new components of the fission and budding yeast anaphase-promoting complexes.</title>
        <authorList>
            <person name="Yoon H.-J."/>
            <person name="Feoktistova A."/>
            <person name="Wolfe B.A."/>
            <person name="Jennings J.L."/>
            <person name="Link A.J."/>
            <person name="Gould K.L."/>
        </authorList>
    </citation>
    <scope>SUBUNIT</scope>
</reference>
<dbReference type="EMBL" id="CU329671">
    <property type="protein sequence ID" value="CAA16839.1"/>
    <property type="molecule type" value="Genomic_DNA"/>
</dbReference>
<dbReference type="EMBL" id="AB012919">
    <property type="protein sequence ID" value="BAA32157.1"/>
    <property type="molecule type" value="Genomic_DNA"/>
</dbReference>
<dbReference type="PIR" id="T39849">
    <property type="entry name" value="T39849"/>
</dbReference>
<dbReference type="RefSeq" id="NP_595803.1">
    <property type="nucleotide sequence ID" value="NM_001021705.2"/>
</dbReference>
<dbReference type="SMR" id="O42971"/>
<dbReference type="BioGRID" id="276837">
    <property type="interactions" value="113"/>
</dbReference>
<dbReference type="ComplexPortal" id="CPX-763">
    <property type="entry name" value="Anaphase-promoting complex"/>
</dbReference>
<dbReference type="ComplexPortal" id="CPX-764">
    <property type="entry name" value="Anaphase-promoting complex, slp1 variant"/>
</dbReference>
<dbReference type="ComplexPortal" id="CPX-765">
    <property type="entry name" value="Anaphase-promoting complex, srw1 variant"/>
</dbReference>
<dbReference type="ComplexPortal" id="CPX-766">
    <property type="entry name" value="Anaphase-promoting complex, mfr1 variant"/>
</dbReference>
<dbReference type="FunCoup" id="O42971">
    <property type="interactions" value="451"/>
</dbReference>
<dbReference type="IntAct" id="O42971">
    <property type="interactions" value="2"/>
</dbReference>
<dbReference type="STRING" id="284812.O42971"/>
<dbReference type="PaxDb" id="4896-SPBC1A4.01.1"/>
<dbReference type="EnsemblFungi" id="SPBC1A4.01.1">
    <property type="protein sequence ID" value="SPBC1A4.01.1:pep"/>
    <property type="gene ID" value="SPBC1A4.01"/>
</dbReference>
<dbReference type="GeneID" id="2540307"/>
<dbReference type="KEGG" id="spo:2540307"/>
<dbReference type="PomBase" id="SPBC1A4.01">
    <property type="gene designation" value="apc10"/>
</dbReference>
<dbReference type="VEuPathDB" id="FungiDB:SPBC1A4.01"/>
<dbReference type="eggNOG" id="KOG3437">
    <property type="taxonomic scope" value="Eukaryota"/>
</dbReference>
<dbReference type="HOGENOM" id="CLU_039415_3_0_1"/>
<dbReference type="InParanoid" id="O42971"/>
<dbReference type="OMA" id="FITIEFP"/>
<dbReference type="PhylomeDB" id="O42971"/>
<dbReference type="Reactome" id="R-SPO-983168">
    <property type="pathway name" value="Antigen processing: Ubiquitination &amp; Proteasome degradation"/>
</dbReference>
<dbReference type="PRO" id="PR:O42971"/>
<dbReference type="Proteomes" id="UP000002485">
    <property type="component" value="Chromosome II"/>
</dbReference>
<dbReference type="GO" id="GO:0005680">
    <property type="term" value="C:anaphase-promoting complex"/>
    <property type="evidence" value="ECO:0000314"/>
    <property type="project" value="PomBase"/>
</dbReference>
<dbReference type="GO" id="GO:0005829">
    <property type="term" value="C:cytosol"/>
    <property type="evidence" value="ECO:0007005"/>
    <property type="project" value="PomBase"/>
</dbReference>
<dbReference type="GO" id="GO:0005634">
    <property type="term" value="C:nucleus"/>
    <property type="evidence" value="ECO:0007005"/>
    <property type="project" value="PomBase"/>
</dbReference>
<dbReference type="GO" id="GO:0031145">
    <property type="term" value="P:anaphase-promoting complex-dependent catabolic process"/>
    <property type="evidence" value="ECO:0000315"/>
    <property type="project" value="PomBase"/>
</dbReference>
<dbReference type="GO" id="GO:0051301">
    <property type="term" value="P:cell division"/>
    <property type="evidence" value="ECO:0007669"/>
    <property type="project" value="UniProtKB-KW"/>
</dbReference>
<dbReference type="GO" id="GO:0070979">
    <property type="term" value="P:protein K11-linked ubiquitination"/>
    <property type="evidence" value="ECO:0000318"/>
    <property type="project" value="GO_Central"/>
</dbReference>
<dbReference type="CDD" id="cd08366">
    <property type="entry name" value="APC10"/>
    <property type="match status" value="1"/>
</dbReference>
<dbReference type="Gene3D" id="2.60.120.260">
    <property type="entry name" value="Galactose-binding domain-like"/>
    <property type="match status" value="1"/>
</dbReference>
<dbReference type="InterPro" id="IPR016901">
    <property type="entry name" value="APC10/Doc1"/>
</dbReference>
<dbReference type="InterPro" id="IPR004939">
    <property type="entry name" value="APC_su10/DOC_dom"/>
</dbReference>
<dbReference type="InterPro" id="IPR008979">
    <property type="entry name" value="Galactose-bd-like_sf"/>
</dbReference>
<dbReference type="PANTHER" id="PTHR12936">
    <property type="entry name" value="ANAPHASE-PROMOTING COMPLEX 10"/>
    <property type="match status" value="1"/>
</dbReference>
<dbReference type="PANTHER" id="PTHR12936:SF0">
    <property type="entry name" value="ANAPHASE-PROMOTING COMPLEX SUBUNIT 10"/>
    <property type="match status" value="1"/>
</dbReference>
<dbReference type="Pfam" id="PF03256">
    <property type="entry name" value="ANAPC10"/>
    <property type="match status" value="1"/>
</dbReference>
<dbReference type="PIRSF" id="PIRSF028841">
    <property type="entry name" value="APC10_sub"/>
    <property type="match status" value="1"/>
</dbReference>
<dbReference type="SMART" id="SM01337">
    <property type="entry name" value="APC10"/>
    <property type="match status" value="1"/>
</dbReference>
<dbReference type="SUPFAM" id="SSF49785">
    <property type="entry name" value="Galactose-binding domain-like"/>
    <property type="match status" value="1"/>
</dbReference>
<dbReference type="PROSITE" id="PS51284">
    <property type="entry name" value="DOC"/>
    <property type="match status" value="1"/>
</dbReference>
<name>APC10_SCHPO</name>
<accession>O42971</accession>
<feature type="chain" id="PRO_0000174015" description="Anaphase-promoting complex subunit 10">
    <location>
        <begin position="1"/>
        <end position="189"/>
    </location>
</feature>
<feature type="domain" description="DOC" evidence="1">
    <location>
        <begin position="2"/>
        <end position="187"/>
    </location>
</feature>
<comment type="function">
    <text evidence="3">Component of the anaphase-promoting complex/cyclosome (APC/C), a cell cycle-regulated E3 ubiquitin-protein ligase complex that controls progression through mitosis and the G1 phase of the cell cycle. The APC/C is thought to confer substrate specificity and, in the presence of ubiquitin-conjugating E2 enzymes, it catalyzes the formation of protein-ubiquitin conjugates that are subsequently degraded by the 26S proteasome. Acts as a positive regulator of the anaphase promoting complex (APC)-cyclosome. Involved in G1 cell cycle arrest in response to nitrogen starvation. Required for ubiquitination and degradation of the mitotic B-type cyclin, cdc13.</text>
</comment>
<comment type="subunit">
    <text evidence="2 3">The APC/C is composed of at least 13 subunits: apc1, apc2, nuc2, apc4, apc5, cut9, apc8, apc10, apc11, hcn1, apc13, apc14 and apc15. Interacts with nuc2.</text>
</comment>
<comment type="similarity">
    <text evidence="4">Belongs to the APC10 family.</text>
</comment>
<evidence type="ECO:0000255" key="1">
    <source>
        <dbReference type="PROSITE-ProRule" id="PRU00614"/>
    </source>
</evidence>
<evidence type="ECO:0000269" key="2">
    <source>
    </source>
</evidence>
<evidence type="ECO:0000269" key="3">
    <source>
    </source>
</evidence>
<evidence type="ECO:0000305" key="4"/>
<sequence length="189" mass="21474">MAQIRQEALKKQKSETQKSTEGFVDIGNLAQWTCSSEKSGFPIRLVRDDNIDTYWQSDGSQPHTIHIKFVKRVSIKYVSMYLQYTLDESYTPSTLRISAGTGFQDLEIVTTVQVEEPTGWVHVPVGDFGRNGLLDVHLIQIKILANHQSGKDSHVRLIKIYAPEIEQPAIAVDEIPYTSLQFISRNQLR</sequence>
<proteinExistence type="evidence at protein level"/>